<evidence type="ECO:0000269" key="1">
    <source>
    </source>
</evidence>
<evidence type="ECO:0000303" key="2">
    <source>
    </source>
</evidence>
<evidence type="ECO:0000303" key="3">
    <source>
    </source>
</evidence>
<evidence type="ECO:0000303" key="4">
    <source>
    </source>
</evidence>
<evidence type="ECO:0007829" key="5">
    <source>
        <dbReference type="PDB" id="2E52"/>
    </source>
</evidence>
<evidence type="ECO:0007829" key="6">
    <source>
        <dbReference type="PDB" id="3WVK"/>
    </source>
</evidence>
<comment type="function">
    <text evidence="1 2">A P subtype restriction enzyme that recognizes the double-stranded sequence 5'-AAGCTT-3' and cleaves after A-1.</text>
</comment>
<comment type="catalytic activity">
    <reaction>
        <text>Endonucleolytic cleavage of DNA to give specific double-stranded fragments with terminal 5'-phosphates.</text>
        <dbReference type="EC" id="3.1.21.4"/>
    </reaction>
</comment>
<sequence length="300" mass="34952">MKKSALEKLLSLIENLTNQEFKQATNSLISFIYKLNRNEVIELVRSIGILPEAIKPSSTQEKLFSKAGDIVLAKAFQLLNLNSKPLEQRGNAGDVIALSKEFNYGLVADAKSFRLSRTAKNQKDFKVKALSEWREDKDYAVLTAPFFQYPTTKSQIFKQSLDENVLLFSWEHLAILLQLDLEETNIFSFEQLWNFPKKQSKKTSVSDAENNFMRDFNKYFMDLFKIDKDTLNQLLQKEINFIEERSLIEKEYWKKQINIIKNFTREEAIEALLKDINMSSKIETIDSFIKGIKSNDRLYL</sequence>
<dbReference type="EC" id="3.1.21.4"/>
<dbReference type="EMBL" id="L15391">
    <property type="protein sequence ID" value="AAA61958.1"/>
    <property type="molecule type" value="Genomic_DNA"/>
</dbReference>
<dbReference type="EMBL" id="L42023">
    <property type="protein sequence ID" value="AAC23040.1"/>
    <property type="molecule type" value="Genomic_DNA"/>
</dbReference>
<dbReference type="PIR" id="H64121">
    <property type="entry name" value="H64121"/>
</dbReference>
<dbReference type="RefSeq" id="NP_439547.1">
    <property type="nucleotide sequence ID" value="NC_000907.1"/>
</dbReference>
<dbReference type="PDB" id="2E52">
    <property type="method" value="X-ray"/>
    <property type="resolution" value="2.00 A"/>
    <property type="chains" value="A/B/C/D=1-300"/>
</dbReference>
<dbReference type="PDB" id="3A4K">
    <property type="method" value="X-ray"/>
    <property type="resolution" value="2.17 A"/>
    <property type="chains" value="A/B/C/D=1-300"/>
</dbReference>
<dbReference type="PDB" id="3WVG">
    <property type="method" value="X-ray"/>
    <property type="resolution" value="2.25 A"/>
    <property type="chains" value="A/B/C/D=1-300"/>
</dbReference>
<dbReference type="PDB" id="3WVH">
    <property type="method" value="X-ray"/>
    <property type="resolution" value="2.54 A"/>
    <property type="chains" value="A/B/C/D=1-300"/>
</dbReference>
<dbReference type="PDB" id="3WVI">
    <property type="method" value="X-ray"/>
    <property type="resolution" value="2.55 A"/>
    <property type="chains" value="A/B/C/D=1-300"/>
</dbReference>
<dbReference type="PDB" id="3WVK">
    <property type="method" value="X-ray"/>
    <property type="resolution" value="2.00 A"/>
    <property type="chains" value="A/B/C/D=1-300"/>
</dbReference>
<dbReference type="PDB" id="3WVP">
    <property type="method" value="X-ray"/>
    <property type="resolution" value="2.30 A"/>
    <property type="chains" value="A/B/C/D=1-300"/>
</dbReference>
<dbReference type="PDBsum" id="2E52"/>
<dbReference type="PDBsum" id="3A4K"/>
<dbReference type="PDBsum" id="3WVG"/>
<dbReference type="PDBsum" id="3WVH"/>
<dbReference type="PDBsum" id="3WVI"/>
<dbReference type="PDBsum" id="3WVK"/>
<dbReference type="PDBsum" id="3WVP"/>
<dbReference type="SMR" id="P43870"/>
<dbReference type="STRING" id="71421.HI_1393"/>
<dbReference type="BindingDB" id="P43870"/>
<dbReference type="ChEMBL" id="CHEMBL5004"/>
<dbReference type="DrugCentral" id="P43870"/>
<dbReference type="REBASE" id="1151">
    <property type="entry name" value="HindIII"/>
</dbReference>
<dbReference type="EnsemblBacteria" id="AAC23040">
    <property type="protein sequence ID" value="AAC23040"/>
    <property type="gene ID" value="HI_1393"/>
</dbReference>
<dbReference type="KEGG" id="hin:HI_1393"/>
<dbReference type="PATRIC" id="fig|71421.8.peg.1452"/>
<dbReference type="eggNOG" id="ENOG5032WDH">
    <property type="taxonomic scope" value="Bacteria"/>
</dbReference>
<dbReference type="HOGENOM" id="CLU_079600_0_0_6"/>
<dbReference type="OrthoDB" id="977705at2"/>
<dbReference type="BioCyc" id="HINF71421:G1GJ1-1421-MONOMER"/>
<dbReference type="BRENDA" id="3.1.21.4">
    <property type="organism ID" value="2529"/>
</dbReference>
<dbReference type="EvolutionaryTrace" id="P43870"/>
<dbReference type="PRO" id="PR:P43870"/>
<dbReference type="Proteomes" id="UP000000579">
    <property type="component" value="Chromosome"/>
</dbReference>
<dbReference type="GO" id="GO:0009036">
    <property type="term" value="F:type II site-specific deoxyribonuclease activity"/>
    <property type="evidence" value="ECO:0007669"/>
    <property type="project" value="UniProtKB-EC"/>
</dbReference>
<dbReference type="GO" id="GO:0009307">
    <property type="term" value="P:DNA restriction-modification system"/>
    <property type="evidence" value="ECO:0007669"/>
    <property type="project" value="UniProtKB-KW"/>
</dbReference>
<dbReference type="CDD" id="cd22330">
    <property type="entry name" value="HindIII-like"/>
    <property type="match status" value="1"/>
</dbReference>
<dbReference type="Gene3D" id="6.10.250.1510">
    <property type="match status" value="1"/>
</dbReference>
<dbReference type="Gene3D" id="3.40.91.70">
    <property type="entry name" value="Type II restriction endonuclease, HindIII"/>
    <property type="match status" value="1"/>
</dbReference>
<dbReference type="InterPro" id="IPR019043">
    <property type="entry name" value="Restrct_endonuc_II_HindIII"/>
</dbReference>
<dbReference type="InterPro" id="IPR038373">
    <property type="entry name" value="Restrct_endonuc_II_HindIII_sf"/>
</dbReference>
<dbReference type="Pfam" id="PF09518">
    <property type="entry name" value="RE_HindIII"/>
    <property type="match status" value="1"/>
</dbReference>
<name>T2D3_HAEIN</name>
<organism>
    <name type="scientific">Haemophilus influenzae (strain ATCC 51907 / DSM 11121 / KW20 / Rd)</name>
    <dbReference type="NCBI Taxonomy" id="71421"/>
    <lineage>
        <taxon>Bacteria</taxon>
        <taxon>Pseudomonadati</taxon>
        <taxon>Pseudomonadota</taxon>
        <taxon>Gammaproteobacteria</taxon>
        <taxon>Pasteurellales</taxon>
        <taxon>Pasteurellaceae</taxon>
        <taxon>Haemophilus</taxon>
    </lineage>
</organism>
<gene>
    <name evidence="4" type="primary">hindIIIR</name>
    <name type="ordered locus">HI_1393</name>
</gene>
<accession>P43870</accession>
<protein>
    <recommendedName>
        <fullName evidence="3">Type II restriction enzyme HindIII</fullName>
        <shortName evidence="4">R.HindIII</shortName>
        <ecNumber>3.1.21.4</ecNumber>
    </recommendedName>
    <alternativeName>
        <fullName>Endonuclease HindIII</fullName>
    </alternativeName>
    <alternativeName>
        <fullName>Type-2 restriction enzyme HindIII</fullName>
    </alternativeName>
</protein>
<keyword id="KW-0002">3D-structure</keyword>
<keyword id="KW-0903">Direct protein sequencing</keyword>
<keyword id="KW-0255">Endonuclease</keyword>
<keyword id="KW-0378">Hydrolase</keyword>
<keyword id="KW-0540">Nuclease</keyword>
<keyword id="KW-1185">Reference proteome</keyword>
<keyword id="KW-0680">Restriction system</keyword>
<proteinExistence type="evidence at protein level"/>
<reference key="1">
    <citation type="journal article" date="1994" name="Gene">
        <title>Cloning, analysis and expression of the HindIII R-M-encoding genes.</title>
        <authorList>
            <person name="Nwankwo D.O."/>
            <person name="Moran L.S."/>
            <person name="Slatko B.E."/>
            <person name="Waite-Rees P.A."/>
            <person name="Dorner L.F."/>
            <person name="Benner J.S."/>
            <person name="Wilson G.G."/>
        </authorList>
    </citation>
    <scope>NUCLEOTIDE SEQUENCE [GENOMIC DNA]</scope>
    <scope>PROTEIN SEQUENCE OF 1-26</scope>
    <scope>FUNCTION</scope>
    <source>
        <strain>ATCC 51907 / DSM 11121 / KW20 / Rd</strain>
    </source>
</reference>
<reference key="2">
    <citation type="journal article" date="1995" name="Science">
        <title>Whole-genome random sequencing and assembly of Haemophilus influenzae Rd.</title>
        <authorList>
            <person name="Fleischmann R.D."/>
            <person name="Adams M.D."/>
            <person name="White O."/>
            <person name="Clayton R.A."/>
            <person name="Kirkness E.F."/>
            <person name="Kerlavage A.R."/>
            <person name="Bult C.J."/>
            <person name="Tomb J.-F."/>
            <person name="Dougherty B.A."/>
            <person name="Merrick J.M."/>
            <person name="McKenney K."/>
            <person name="Sutton G.G."/>
            <person name="FitzHugh W."/>
            <person name="Fields C.A."/>
            <person name="Gocayne J.D."/>
            <person name="Scott J.D."/>
            <person name="Shirley R."/>
            <person name="Liu L.-I."/>
            <person name="Glodek A."/>
            <person name="Kelley J.M."/>
            <person name="Weidman J.F."/>
            <person name="Phillips C.A."/>
            <person name="Spriggs T."/>
            <person name="Hedblom E."/>
            <person name="Cotton M.D."/>
            <person name="Utterback T.R."/>
            <person name="Hanna M.C."/>
            <person name="Nguyen D.T."/>
            <person name="Saudek D.M."/>
            <person name="Brandon R.C."/>
            <person name="Fine L.D."/>
            <person name="Fritchman J.L."/>
            <person name="Fuhrmann J.L."/>
            <person name="Geoghagen N.S.M."/>
            <person name="Gnehm C.L."/>
            <person name="McDonald L.A."/>
            <person name="Small K.V."/>
            <person name="Fraser C.M."/>
            <person name="Smith H.O."/>
            <person name="Venter J.C."/>
        </authorList>
    </citation>
    <scope>NUCLEOTIDE SEQUENCE [LARGE SCALE GENOMIC DNA]</scope>
    <source>
        <strain>ATCC 51907 / DSM 11121 / KW20 / Rd</strain>
    </source>
</reference>
<reference key="3">
    <citation type="journal article" date="2003" name="Nucleic Acids Res.">
        <title>A nomenclature for restriction enzymes, DNA methyltransferases, homing endonucleases and their genes.</title>
        <authorList>
            <person name="Roberts R.J."/>
            <person name="Belfort M."/>
            <person name="Bestor T."/>
            <person name="Bhagwat A.S."/>
            <person name="Bickle T.A."/>
            <person name="Bitinaite J."/>
            <person name="Blumenthal R.M."/>
            <person name="Degtyarev S.K."/>
            <person name="Dryden D.T."/>
            <person name="Dybvig K."/>
            <person name="Firman K."/>
            <person name="Gromova E.S."/>
            <person name="Gumport R.I."/>
            <person name="Halford S.E."/>
            <person name="Hattman S."/>
            <person name="Heitman J."/>
            <person name="Hornby D.P."/>
            <person name="Janulaitis A."/>
            <person name="Jeltsch A."/>
            <person name="Josephsen J."/>
            <person name="Kiss A."/>
            <person name="Klaenhammer T.R."/>
            <person name="Kobayashi I."/>
            <person name="Kong H."/>
            <person name="Krueger D.H."/>
            <person name="Lacks S."/>
            <person name="Marinus M.G."/>
            <person name="Miyahara M."/>
            <person name="Morgan R.D."/>
            <person name="Murray N.E."/>
            <person name="Nagaraja V."/>
            <person name="Piekarowicz A."/>
            <person name="Pingoud A."/>
            <person name="Raleigh E."/>
            <person name="Rao D.N."/>
            <person name="Reich N."/>
            <person name="Repin V.E."/>
            <person name="Selker E.U."/>
            <person name="Shaw P.C."/>
            <person name="Stein D.C."/>
            <person name="Stoddard B.L."/>
            <person name="Szybalski W."/>
            <person name="Trautner T.A."/>
            <person name="Van Etten J.L."/>
            <person name="Vitor J.M."/>
            <person name="Wilson G.G."/>
            <person name="Xu S.Y."/>
        </authorList>
    </citation>
    <scope>NOMENCLATURE</scope>
    <scope>SUBTYPE</scope>
</reference>
<feature type="chain" id="PRO_0000077321" description="Type II restriction enzyme HindIII">
    <location>
        <begin position="1"/>
        <end position="300"/>
    </location>
</feature>
<feature type="helix" evidence="5">
    <location>
        <begin position="5"/>
        <end position="15"/>
    </location>
</feature>
<feature type="turn" evidence="5">
    <location>
        <begin position="16"/>
        <end position="18"/>
    </location>
</feature>
<feature type="helix" evidence="5">
    <location>
        <begin position="21"/>
        <end position="33"/>
    </location>
</feature>
<feature type="helix" evidence="5">
    <location>
        <begin position="37"/>
        <end position="47"/>
    </location>
</feature>
<feature type="helix" evidence="5">
    <location>
        <begin position="59"/>
        <end position="78"/>
    </location>
</feature>
<feature type="strand" evidence="5">
    <location>
        <begin position="81"/>
        <end position="85"/>
    </location>
</feature>
<feature type="strand" evidence="6">
    <location>
        <begin position="89"/>
        <end position="91"/>
    </location>
</feature>
<feature type="strand" evidence="5">
    <location>
        <begin position="94"/>
        <end position="103"/>
    </location>
</feature>
<feature type="strand" evidence="5">
    <location>
        <begin position="105"/>
        <end position="110"/>
    </location>
</feature>
<feature type="helix" evidence="5">
    <location>
        <begin position="122"/>
        <end position="125"/>
    </location>
</feature>
<feature type="helix" evidence="5">
    <location>
        <begin position="127"/>
        <end position="133"/>
    </location>
</feature>
<feature type="turn" evidence="5">
    <location>
        <begin position="134"/>
        <end position="136"/>
    </location>
</feature>
<feature type="strand" evidence="5">
    <location>
        <begin position="137"/>
        <end position="144"/>
    </location>
</feature>
<feature type="helix" evidence="5">
    <location>
        <begin position="146"/>
        <end position="148"/>
    </location>
</feature>
<feature type="strand" evidence="5">
    <location>
        <begin position="151"/>
        <end position="153"/>
    </location>
</feature>
<feature type="helix" evidence="5">
    <location>
        <begin position="155"/>
        <end position="163"/>
    </location>
</feature>
<feature type="strand" evidence="5">
    <location>
        <begin position="165"/>
        <end position="169"/>
    </location>
</feature>
<feature type="helix" evidence="5">
    <location>
        <begin position="170"/>
        <end position="178"/>
    </location>
</feature>
<feature type="helix" evidence="5">
    <location>
        <begin position="190"/>
        <end position="193"/>
    </location>
</feature>
<feature type="helix" evidence="5">
    <location>
        <begin position="195"/>
        <end position="200"/>
    </location>
</feature>
<feature type="helix" evidence="5">
    <location>
        <begin position="205"/>
        <end position="207"/>
    </location>
</feature>
<feature type="helix" evidence="5">
    <location>
        <begin position="213"/>
        <end position="224"/>
    </location>
</feature>
<feature type="helix" evidence="5">
    <location>
        <begin position="228"/>
        <end position="261"/>
    </location>
</feature>
<feature type="helix" evidence="5">
    <location>
        <begin position="265"/>
        <end position="275"/>
    </location>
</feature>
<feature type="helix" evidence="5">
    <location>
        <begin position="278"/>
        <end position="293"/>
    </location>
</feature>
<feature type="helix" evidence="5">
    <location>
        <begin position="295"/>
        <end position="298"/>
    </location>
</feature>